<dbReference type="EMBL" id="CP000439">
    <property type="protein sequence ID" value="ABK89349.1"/>
    <property type="molecule type" value="Genomic_DNA"/>
</dbReference>
<dbReference type="RefSeq" id="WP_003038470.1">
    <property type="nucleotide sequence ID" value="NC_008601.1"/>
</dbReference>
<dbReference type="SMR" id="A0Q534"/>
<dbReference type="KEGG" id="ftn:FTN_0446"/>
<dbReference type="KEGG" id="ftx:AW25_1588"/>
<dbReference type="BioCyc" id="FTUL401614:G1G75-465-MONOMER"/>
<dbReference type="Proteomes" id="UP000000762">
    <property type="component" value="Chromosome"/>
</dbReference>
<dbReference type="GO" id="GO:0005525">
    <property type="term" value="F:GTP binding"/>
    <property type="evidence" value="ECO:0007669"/>
    <property type="project" value="UniProtKB-UniRule"/>
</dbReference>
<dbReference type="GO" id="GO:0043022">
    <property type="term" value="F:ribosome binding"/>
    <property type="evidence" value="ECO:0007669"/>
    <property type="project" value="TreeGrafter"/>
</dbReference>
<dbReference type="GO" id="GO:0042254">
    <property type="term" value="P:ribosome biogenesis"/>
    <property type="evidence" value="ECO:0007669"/>
    <property type="project" value="UniProtKB-KW"/>
</dbReference>
<dbReference type="CDD" id="cd01894">
    <property type="entry name" value="EngA1"/>
    <property type="match status" value="1"/>
</dbReference>
<dbReference type="CDD" id="cd01895">
    <property type="entry name" value="EngA2"/>
    <property type="match status" value="1"/>
</dbReference>
<dbReference type="FunFam" id="3.30.300.20:FF:000004">
    <property type="entry name" value="GTPase Der"/>
    <property type="match status" value="1"/>
</dbReference>
<dbReference type="FunFam" id="3.40.50.300:FF:000040">
    <property type="entry name" value="GTPase Der"/>
    <property type="match status" value="1"/>
</dbReference>
<dbReference type="FunFam" id="3.40.50.300:FF:000057">
    <property type="entry name" value="GTPase Der"/>
    <property type="match status" value="1"/>
</dbReference>
<dbReference type="Gene3D" id="3.30.300.20">
    <property type="match status" value="1"/>
</dbReference>
<dbReference type="Gene3D" id="3.40.50.300">
    <property type="entry name" value="P-loop containing nucleotide triphosphate hydrolases"/>
    <property type="match status" value="2"/>
</dbReference>
<dbReference type="HAMAP" id="MF_00195">
    <property type="entry name" value="GTPase_Der"/>
    <property type="match status" value="1"/>
</dbReference>
<dbReference type="InterPro" id="IPR031166">
    <property type="entry name" value="G_ENGA"/>
</dbReference>
<dbReference type="InterPro" id="IPR006073">
    <property type="entry name" value="GTP-bd"/>
</dbReference>
<dbReference type="InterPro" id="IPR016484">
    <property type="entry name" value="GTPase_Der"/>
</dbReference>
<dbReference type="InterPro" id="IPR032859">
    <property type="entry name" value="KH_dom-like"/>
</dbReference>
<dbReference type="InterPro" id="IPR015946">
    <property type="entry name" value="KH_dom-like_a/b"/>
</dbReference>
<dbReference type="InterPro" id="IPR027417">
    <property type="entry name" value="P-loop_NTPase"/>
</dbReference>
<dbReference type="InterPro" id="IPR005225">
    <property type="entry name" value="Small_GTP-bd"/>
</dbReference>
<dbReference type="NCBIfam" id="TIGR03594">
    <property type="entry name" value="GTPase_EngA"/>
    <property type="match status" value="1"/>
</dbReference>
<dbReference type="NCBIfam" id="TIGR00231">
    <property type="entry name" value="small_GTP"/>
    <property type="match status" value="2"/>
</dbReference>
<dbReference type="PANTHER" id="PTHR43834">
    <property type="entry name" value="GTPASE DER"/>
    <property type="match status" value="1"/>
</dbReference>
<dbReference type="PANTHER" id="PTHR43834:SF6">
    <property type="entry name" value="GTPASE DER"/>
    <property type="match status" value="1"/>
</dbReference>
<dbReference type="Pfam" id="PF14714">
    <property type="entry name" value="KH_dom-like"/>
    <property type="match status" value="1"/>
</dbReference>
<dbReference type="Pfam" id="PF01926">
    <property type="entry name" value="MMR_HSR1"/>
    <property type="match status" value="2"/>
</dbReference>
<dbReference type="PIRSF" id="PIRSF006485">
    <property type="entry name" value="GTP-binding_EngA"/>
    <property type="match status" value="1"/>
</dbReference>
<dbReference type="PRINTS" id="PR00326">
    <property type="entry name" value="GTP1OBG"/>
</dbReference>
<dbReference type="SUPFAM" id="SSF52540">
    <property type="entry name" value="P-loop containing nucleoside triphosphate hydrolases"/>
    <property type="match status" value="2"/>
</dbReference>
<dbReference type="PROSITE" id="PS51712">
    <property type="entry name" value="G_ENGA"/>
    <property type="match status" value="2"/>
</dbReference>
<feature type="chain" id="PRO_1000011626" description="GTPase Der">
    <location>
        <begin position="1"/>
        <end position="465"/>
    </location>
</feature>
<feature type="domain" description="EngA-type G 1">
    <location>
        <begin position="3"/>
        <end position="166"/>
    </location>
</feature>
<feature type="domain" description="EngA-type G 2">
    <location>
        <begin position="184"/>
        <end position="358"/>
    </location>
</feature>
<feature type="domain" description="KH-like" evidence="1">
    <location>
        <begin position="359"/>
        <end position="443"/>
    </location>
</feature>
<feature type="region of interest" description="Disordered" evidence="2">
    <location>
        <begin position="446"/>
        <end position="465"/>
    </location>
</feature>
<feature type="binding site" evidence="1">
    <location>
        <begin position="9"/>
        <end position="16"/>
    </location>
    <ligand>
        <name>GTP</name>
        <dbReference type="ChEBI" id="CHEBI:37565"/>
        <label>1</label>
    </ligand>
</feature>
<feature type="binding site" evidence="1">
    <location>
        <begin position="56"/>
        <end position="60"/>
    </location>
    <ligand>
        <name>GTP</name>
        <dbReference type="ChEBI" id="CHEBI:37565"/>
        <label>1</label>
    </ligand>
</feature>
<feature type="binding site" evidence="1">
    <location>
        <begin position="118"/>
        <end position="121"/>
    </location>
    <ligand>
        <name>GTP</name>
        <dbReference type="ChEBI" id="CHEBI:37565"/>
        <label>1</label>
    </ligand>
</feature>
<feature type="binding site" evidence="1">
    <location>
        <begin position="190"/>
        <end position="197"/>
    </location>
    <ligand>
        <name>GTP</name>
        <dbReference type="ChEBI" id="CHEBI:37565"/>
        <label>2</label>
    </ligand>
</feature>
<feature type="binding site" evidence="1">
    <location>
        <begin position="237"/>
        <end position="241"/>
    </location>
    <ligand>
        <name>GTP</name>
        <dbReference type="ChEBI" id="CHEBI:37565"/>
        <label>2</label>
    </ligand>
</feature>
<feature type="binding site" evidence="1">
    <location>
        <begin position="302"/>
        <end position="305"/>
    </location>
    <ligand>
        <name>GTP</name>
        <dbReference type="ChEBI" id="CHEBI:37565"/>
        <label>2</label>
    </ligand>
</feature>
<accession>A0Q534</accession>
<keyword id="KW-0342">GTP-binding</keyword>
<keyword id="KW-0547">Nucleotide-binding</keyword>
<keyword id="KW-0677">Repeat</keyword>
<keyword id="KW-0690">Ribosome biogenesis</keyword>
<reference key="1">
    <citation type="journal article" date="2007" name="Genome Biol.">
        <title>Comparison of Francisella tularensis genomes reveals evolutionary events associated with the emergence of human pathogenic strains.</title>
        <authorList>
            <person name="Rohmer L."/>
            <person name="Fong C."/>
            <person name="Abmayr S."/>
            <person name="Wasnick M."/>
            <person name="Larson Freeman T.J."/>
            <person name="Radey M."/>
            <person name="Guina T."/>
            <person name="Svensson K."/>
            <person name="Hayden H.S."/>
            <person name="Jacobs M."/>
            <person name="Gallagher L.A."/>
            <person name="Manoil C."/>
            <person name="Ernst R.K."/>
            <person name="Drees B."/>
            <person name="Buckley D."/>
            <person name="Haugen E."/>
            <person name="Bovee D."/>
            <person name="Zhou Y."/>
            <person name="Chang J."/>
            <person name="Levy R."/>
            <person name="Lim R."/>
            <person name="Gillett W."/>
            <person name="Guenthener D."/>
            <person name="Kang A."/>
            <person name="Shaffer S.A."/>
            <person name="Taylor G."/>
            <person name="Chen J."/>
            <person name="Gallis B."/>
            <person name="D'Argenio D.A."/>
            <person name="Forsman M."/>
            <person name="Olson M.V."/>
            <person name="Goodlett D.R."/>
            <person name="Kaul R."/>
            <person name="Miller S.I."/>
            <person name="Brittnacher M.J."/>
        </authorList>
    </citation>
    <scope>NUCLEOTIDE SEQUENCE [LARGE SCALE GENOMIC DNA]</scope>
    <source>
        <strain>U112</strain>
    </source>
</reference>
<proteinExistence type="inferred from homology"/>
<protein>
    <recommendedName>
        <fullName evidence="1">GTPase Der</fullName>
    </recommendedName>
    <alternativeName>
        <fullName evidence="1">GTP-binding protein EngA</fullName>
    </alternativeName>
</protein>
<gene>
    <name evidence="1" type="primary">der</name>
    <name type="synonym">engA</name>
    <name type="ordered locus">FTN_0446</name>
</gene>
<name>DER_FRATN</name>
<evidence type="ECO:0000255" key="1">
    <source>
        <dbReference type="HAMAP-Rule" id="MF_00195"/>
    </source>
</evidence>
<evidence type="ECO:0000256" key="2">
    <source>
        <dbReference type="SAM" id="MobiDB-lite"/>
    </source>
</evidence>
<sequence>MSFLVAIVGRANVGKSTLFNVLTNSRDALVFDFEGVTRDRQYGQAKYDDLDYLVVDTGGISDKDVGFDEFMAKQSQIAIDEANLVFFVVDGRSGLTTGDEYVASLLRQKDKKVVVVVNKVDGTDEEAAMAEFYSFGFDKVFAISAAHRRNTQKLVDKFLKKPLNEYYQDYTQTQEHKEQQRHGIHFSLIGRPNVGKSTLTNRMLGEDRVVVFDMPGTTIDSVSIPFERHGQKYTIVDTAGVRKRGKVKQTLEKFSVIKTLQAIQDSNVVVAVVDARQGISDQDLSLIHFAIKNGRALVLAVNKWDGMTEEDRIQVKQDLKRKLFFLQDYVDIHFISALHGTNVGHVFESIDTAYACANKKITTADATRLMQLAVEAHSPPMVGKFRIKLKYAHVGGHNPPVIVIHGNQVSRLPNSYKRYLENFFREALDFRGTPIVFEFKQSENPFADRKNKRSKDEGSKSKKVK</sequence>
<comment type="function">
    <text evidence="1">GTPase that plays an essential role in the late steps of ribosome biogenesis.</text>
</comment>
<comment type="subunit">
    <text evidence="1">Associates with the 50S ribosomal subunit.</text>
</comment>
<comment type="similarity">
    <text evidence="1">Belongs to the TRAFAC class TrmE-Era-EngA-EngB-Septin-like GTPase superfamily. EngA (Der) GTPase family.</text>
</comment>
<organism>
    <name type="scientific">Francisella tularensis subsp. novicida (strain U112)</name>
    <dbReference type="NCBI Taxonomy" id="401614"/>
    <lineage>
        <taxon>Bacteria</taxon>
        <taxon>Pseudomonadati</taxon>
        <taxon>Pseudomonadota</taxon>
        <taxon>Gammaproteobacteria</taxon>
        <taxon>Thiotrichales</taxon>
        <taxon>Francisellaceae</taxon>
        <taxon>Francisella</taxon>
    </lineage>
</organism>